<comment type="function">
    <text evidence="1">Fluoride-specific ion channel. Important for reducing fluoride concentration in the cell, thus reducing its toxicity.</text>
</comment>
<comment type="catalytic activity">
    <reaction evidence="1">
        <text>fluoride(in) = fluoride(out)</text>
        <dbReference type="Rhea" id="RHEA:76159"/>
        <dbReference type="ChEBI" id="CHEBI:17051"/>
    </reaction>
    <physiologicalReaction direction="left-to-right" evidence="1">
        <dbReference type="Rhea" id="RHEA:76160"/>
    </physiologicalReaction>
</comment>
<comment type="activity regulation">
    <text evidence="1">Na(+) is not transported, but it plays an essential structural role and its presence is essential for fluoride channel function.</text>
</comment>
<comment type="subcellular location">
    <subcellularLocation>
        <location evidence="1">Cell inner membrane</location>
        <topology evidence="1">Multi-pass membrane protein</topology>
    </subcellularLocation>
</comment>
<comment type="similarity">
    <text evidence="1">Belongs to the fluoride channel Fluc/FEX (TC 1.A.43) family.</text>
</comment>
<sequence length="228" mass="23364">MNLSLFAIALGGAAGALARFWVSNGLYGWLGRDFPHGTLFINVSGSFLMGFLSVMMIQRFALAAEYRAAVLVGFLGAYTTFSTFSLETLALFEEGSLLKAALNVLLSVVLCLAAVWVGAVLARRLAVGEIAALVGGPGLRIFGAACGMSLLAGFAAALAFARAGLGPQLESLVLVALTGLVVVGTLVALVVTGTELRGAFQLWGAFTLSAFAAVVFLSLGLVLARGAG</sequence>
<proteinExistence type="inferred from homology"/>
<name>FLUC_METCA</name>
<gene>
    <name evidence="1" type="primary">fluC</name>
    <name evidence="1" type="synonym">crcB</name>
    <name type="ordered locus">MCA1973</name>
</gene>
<dbReference type="EMBL" id="AE017282">
    <property type="protein sequence ID" value="AAU92003.1"/>
    <property type="molecule type" value="Genomic_DNA"/>
</dbReference>
<dbReference type="RefSeq" id="WP_010961218.1">
    <property type="nucleotide sequence ID" value="NC_002977.6"/>
</dbReference>
<dbReference type="SMR" id="Q606P3"/>
<dbReference type="STRING" id="243233.MCA1973"/>
<dbReference type="GeneID" id="88224203"/>
<dbReference type="KEGG" id="mca:MCA1973"/>
<dbReference type="eggNOG" id="COG0239">
    <property type="taxonomic scope" value="Bacteria"/>
</dbReference>
<dbReference type="HOGENOM" id="CLU_1179107_0_0_6"/>
<dbReference type="Proteomes" id="UP000006821">
    <property type="component" value="Chromosome"/>
</dbReference>
<dbReference type="GO" id="GO:0005886">
    <property type="term" value="C:plasma membrane"/>
    <property type="evidence" value="ECO:0007669"/>
    <property type="project" value="UniProtKB-SubCell"/>
</dbReference>
<dbReference type="GO" id="GO:0062054">
    <property type="term" value="F:fluoride channel activity"/>
    <property type="evidence" value="ECO:0007669"/>
    <property type="project" value="UniProtKB-UniRule"/>
</dbReference>
<dbReference type="GO" id="GO:0046872">
    <property type="term" value="F:metal ion binding"/>
    <property type="evidence" value="ECO:0007669"/>
    <property type="project" value="UniProtKB-KW"/>
</dbReference>
<dbReference type="GO" id="GO:0140114">
    <property type="term" value="P:cellular detoxification of fluoride"/>
    <property type="evidence" value="ECO:0007669"/>
    <property type="project" value="UniProtKB-UniRule"/>
</dbReference>
<dbReference type="HAMAP" id="MF_00454">
    <property type="entry name" value="FluC"/>
    <property type="match status" value="1"/>
</dbReference>
<dbReference type="InterPro" id="IPR003691">
    <property type="entry name" value="FluC"/>
</dbReference>
<dbReference type="NCBIfam" id="TIGR00494">
    <property type="entry name" value="crcB"/>
    <property type="match status" value="1"/>
</dbReference>
<dbReference type="PANTHER" id="PTHR28259">
    <property type="entry name" value="FLUORIDE EXPORT PROTEIN 1-RELATED"/>
    <property type="match status" value="1"/>
</dbReference>
<dbReference type="PANTHER" id="PTHR28259:SF1">
    <property type="entry name" value="FLUORIDE EXPORT PROTEIN 1-RELATED"/>
    <property type="match status" value="1"/>
</dbReference>
<dbReference type="Pfam" id="PF02537">
    <property type="entry name" value="CRCB"/>
    <property type="match status" value="1"/>
</dbReference>
<evidence type="ECO:0000255" key="1">
    <source>
        <dbReference type="HAMAP-Rule" id="MF_00454"/>
    </source>
</evidence>
<organism>
    <name type="scientific">Methylococcus capsulatus (strain ATCC 33009 / NCIMB 11132 / Bath)</name>
    <dbReference type="NCBI Taxonomy" id="243233"/>
    <lineage>
        <taxon>Bacteria</taxon>
        <taxon>Pseudomonadati</taxon>
        <taxon>Pseudomonadota</taxon>
        <taxon>Gammaproteobacteria</taxon>
        <taxon>Methylococcales</taxon>
        <taxon>Methylococcaceae</taxon>
        <taxon>Methylococcus</taxon>
    </lineage>
</organism>
<keyword id="KW-0997">Cell inner membrane</keyword>
<keyword id="KW-1003">Cell membrane</keyword>
<keyword id="KW-0407">Ion channel</keyword>
<keyword id="KW-0406">Ion transport</keyword>
<keyword id="KW-0472">Membrane</keyword>
<keyword id="KW-0479">Metal-binding</keyword>
<keyword id="KW-1185">Reference proteome</keyword>
<keyword id="KW-0915">Sodium</keyword>
<keyword id="KW-0812">Transmembrane</keyword>
<keyword id="KW-1133">Transmembrane helix</keyword>
<keyword id="KW-0813">Transport</keyword>
<reference key="1">
    <citation type="journal article" date="2004" name="PLoS Biol.">
        <title>Genomic insights into methanotrophy: the complete genome sequence of Methylococcus capsulatus (Bath).</title>
        <authorList>
            <person name="Ward N.L."/>
            <person name="Larsen O."/>
            <person name="Sakwa J."/>
            <person name="Bruseth L."/>
            <person name="Khouri H.M."/>
            <person name="Durkin A.S."/>
            <person name="Dimitrov G."/>
            <person name="Jiang L."/>
            <person name="Scanlan D."/>
            <person name="Kang K.H."/>
            <person name="Lewis M.R."/>
            <person name="Nelson K.E."/>
            <person name="Methe B.A."/>
            <person name="Wu M."/>
            <person name="Heidelberg J.F."/>
            <person name="Paulsen I.T."/>
            <person name="Fouts D.E."/>
            <person name="Ravel J."/>
            <person name="Tettelin H."/>
            <person name="Ren Q."/>
            <person name="Read T.D."/>
            <person name="DeBoy R.T."/>
            <person name="Seshadri R."/>
            <person name="Salzberg S.L."/>
            <person name="Jensen H.B."/>
            <person name="Birkeland N.K."/>
            <person name="Nelson W.C."/>
            <person name="Dodson R.J."/>
            <person name="Grindhaug S.H."/>
            <person name="Holt I.E."/>
            <person name="Eidhammer I."/>
            <person name="Jonasen I."/>
            <person name="Vanaken S."/>
            <person name="Utterback T.R."/>
            <person name="Feldblyum T.V."/>
            <person name="Fraser C.M."/>
            <person name="Lillehaug J.R."/>
            <person name="Eisen J.A."/>
        </authorList>
    </citation>
    <scope>NUCLEOTIDE SEQUENCE [LARGE SCALE GENOMIC DNA]</scope>
    <source>
        <strain>ATCC 33009 / NCIMB 11132 / Bath</strain>
    </source>
</reference>
<protein>
    <recommendedName>
        <fullName evidence="1">Fluoride-specific ion channel FluC</fullName>
    </recommendedName>
</protein>
<accession>Q606P3</accession>
<feature type="chain" id="PRO_0000110132" description="Fluoride-specific ion channel FluC">
    <location>
        <begin position="1"/>
        <end position="228"/>
    </location>
</feature>
<feature type="transmembrane region" description="Helical" evidence="1">
    <location>
        <begin position="3"/>
        <end position="23"/>
    </location>
</feature>
<feature type="transmembrane region" description="Helical" evidence="1">
    <location>
        <begin position="37"/>
        <end position="57"/>
    </location>
</feature>
<feature type="transmembrane region" description="Helical" evidence="1">
    <location>
        <begin position="72"/>
        <end position="92"/>
    </location>
</feature>
<feature type="transmembrane region" description="Helical" evidence="1">
    <location>
        <begin position="101"/>
        <end position="121"/>
    </location>
</feature>
<feature type="transmembrane region" description="Helical" evidence="1">
    <location>
        <begin position="141"/>
        <end position="161"/>
    </location>
</feature>
<feature type="transmembrane region" description="Helical" evidence="1">
    <location>
        <begin position="172"/>
        <end position="192"/>
    </location>
</feature>
<feature type="transmembrane region" description="Helical" evidence="1">
    <location>
        <begin position="202"/>
        <end position="222"/>
    </location>
</feature>
<feature type="binding site" evidence="1">
    <location>
        <position position="76"/>
    </location>
    <ligand>
        <name>Na(+)</name>
        <dbReference type="ChEBI" id="CHEBI:29101"/>
        <note>structural</note>
    </ligand>
</feature>
<feature type="binding site" evidence="1">
    <location>
        <position position="79"/>
    </location>
    <ligand>
        <name>Na(+)</name>
        <dbReference type="ChEBI" id="CHEBI:29101"/>
        <note>structural</note>
    </ligand>
</feature>